<evidence type="ECO:0000255" key="1">
    <source>
        <dbReference type="HAMAP-Rule" id="MF_01343"/>
    </source>
</evidence>
<evidence type="ECO:0000305" key="2"/>
<protein>
    <recommendedName>
        <fullName evidence="1">Small ribosomal subunit protein uS15</fullName>
    </recommendedName>
    <alternativeName>
        <fullName evidence="2">30S ribosomal protein S15</fullName>
    </alternativeName>
</protein>
<proteinExistence type="inferred from homology"/>
<name>RS15_BURO0</name>
<comment type="function">
    <text evidence="1">One of the primary rRNA binding proteins, it binds directly to 16S rRNA where it helps nucleate assembly of the platform of the 30S subunit by binding and bridging several RNA helices of the 16S rRNA.</text>
</comment>
<comment type="function">
    <text evidence="1">Forms an intersubunit bridge (bridge B4) with the 23S rRNA of the 50S subunit in the ribosome.</text>
</comment>
<comment type="subunit">
    <text evidence="1">Part of the 30S ribosomal subunit. Forms a bridge to the 50S subunit in the 70S ribosome, contacting the 23S rRNA.</text>
</comment>
<comment type="similarity">
    <text evidence="1">Belongs to the universal ribosomal protein uS15 family.</text>
</comment>
<reference key="1">
    <citation type="submission" date="2008-02" db="EMBL/GenBank/DDBJ databases">
        <title>Complete sequence of chromosome 1 of Burkholderia cenocepacia MC0-3.</title>
        <authorList>
            <person name="Copeland A."/>
            <person name="Lucas S."/>
            <person name="Lapidus A."/>
            <person name="Barry K."/>
            <person name="Bruce D."/>
            <person name="Goodwin L."/>
            <person name="Glavina del Rio T."/>
            <person name="Dalin E."/>
            <person name="Tice H."/>
            <person name="Pitluck S."/>
            <person name="Chain P."/>
            <person name="Malfatti S."/>
            <person name="Shin M."/>
            <person name="Vergez L."/>
            <person name="Schmutz J."/>
            <person name="Larimer F."/>
            <person name="Land M."/>
            <person name="Hauser L."/>
            <person name="Kyrpides N."/>
            <person name="Mikhailova N."/>
            <person name="Tiedje J."/>
            <person name="Richardson P."/>
        </authorList>
    </citation>
    <scope>NUCLEOTIDE SEQUENCE [LARGE SCALE GENOMIC DNA]</scope>
    <source>
        <strain>MC0-3</strain>
    </source>
</reference>
<keyword id="KW-0687">Ribonucleoprotein</keyword>
<keyword id="KW-0689">Ribosomal protein</keyword>
<keyword id="KW-0694">RNA-binding</keyword>
<keyword id="KW-0699">rRNA-binding</keyword>
<feature type="chain" id="PRO_1000143085" description="Small ribosomal subunit protein uS15">
    <location>
        <begin position="1"/>
        <end position="89"/>
    </location>
</feature>
<gene>
    <name evidence="1" type="primary">rpsO</name>
    <name type="ordered locus">Bcenmc03_2278</name>
</gene>
<sequence length="89" mass="10126">MSVADIKKSEVVAQFARGTNDTGSPEVQVALLTARIVELTGHFKTHAKDHHSRRGLLRMVSRRRKLLDYLKGKDADRYRALIEKLGLRK</sequence>
<accession>B1JVP6</accession>
<organism>
    <name type="scientific">Burkholderia orbicola (strain MC0-3)</name>
    <dbReference type="NCBI Taxonomy" id="406425"/>
    <lineage>
        <taxon>Bacteria</taxon>
        <taxon>Pseudomonadati</taxon>
        <taxon>Pseudomonadota</taxon>
        <taxon>Betaproteobacteria</taxon>
        <taxon>Burkholderiales</taxon>
        <taxon>Burkholderiaceae</taxon>
        <taxon>Burkholderia</taxon>
        <taxon>Burkholderia cepacia complex</taxon>
        <taxon>Burkholderia orbicola</taxon>
    </lineage>
</organism>
<dbReference type="EMBL" id="CP000958">
    <property type="protein sequence ID" value="ACA91439.1"/>
    <property type="molecule type" value="Genomic_DNA"/>
</dbReference>
<dbReference type="RefSeq" id="WP_006398792.1">
    <property type="nucleotide sequence ID" value="NC_010508.1"/>
</dbReference>
<dbReference type="SMR" id="B1JVP6"/>
<dbReference type="GeneID" id="98107299"/>
<dbReference type="KEGG" id="bcm:Bcenmc03_2278"/>
<dbReference type="HOGENOM" id="CLU_148518_0_0_4"/>
<dbReference type="Proteomes" id="UP000002169">
    <property type="component" value="Chromosome 1"/>
</dbReference>
<dbReference type="GO" id="GO:0022627">
    <property type="term" value="C:cytosolic small ribosomal subunit"/>
    <property type="evidence" value="ECO:0007669"/>
    <property type="project" value="TreeGrafter"/>
</dbReference>
<dbReference type="GO" id="GO:0019843">
    <property type="term" value="F:rRNA binding"/>
    <property type="evidence" value="ECO:0007669"/>
    <property type="project" value="UniProtKB-UniRule"/>
</dbReference>
<dbReference type="GO" id="GO:0003735">
    <property type="term" value="F:structural constituent of ribosome"/>
    <property type="evidence" value="ECO:0007669"/>
    <property type="project" value="InterPro"/>
</dbReference>
<dbReference type="GO" id="GO:0006412">
    <property type="term" value="P:translation"/>
    <property type="evidence" value="ECO:0007669"/>
    <property type="project" value="UniProtKB-UniRule"/>
</dbReference>
<dbReference type="CDD" id="cd00353">
    <property type="entry name" value="Ribosomal_S15p_S13e"/>
    <property type="match status" value="1"/>
</dbReference>
<dbReference type="FunFam" id="1.10.287.10:FF:000002">
    <property type="entry name" value="30S ribosomal protein S15"/>
    <property type="match status" value="1"/>
</dbReference>
<dbReference type="Gene3D" id="6.10.250.3130">
    <property type="match status" value="1"/>
</dbReference>
<dbReference type="Gene3D" id="1.10.287.10">
    <property type="entry name" value="S15/NS1, RNA-binding"/>
    <property type="match status" value="1"/>
</dbReference>
<dbReference type="HAMAP" id="MF_01343_B">
    <property type="entry name" value="Ribosomal_uS15_B"/>
    <property type="match status" value="1"/>
</dbReference>
<dbReference type="InterPro" id="IPR000589">
    <property type="entry name" value="Ribosomal_uS15"/>
</dbReference>
<dbReference type="InterPro" id="IPR005290">
    <property type="entry name" value="Ribosomal_uS15_bac-type"/>
</dbReference>
<dbReference type="InterPro" id="IPR009068">
    <property type="entry name" value="uS15_NS1_RNA-bd_sf"/>
</dbReference>
<dbReference type="NCBIfam" id="TIGR00952">
    <property type="entry name" value="S15_bact"/>
    <property type="match status" value="1"/>
</dbReference>
<dbReference type="PANTHER" id="PTHR23321">
    <property type="entry name" value="RIBOSOMAL PROTEIN S15, BACTERIAL AND ORGANELLAR"/>
    <property type="match status" value="1"/>
</dbReference>
<dbReference type="PANTHER" id="PTHR23321:SF26">
    <property type="entry name" value="SMALL RIBOSOMAL SUBUNIT PROTEIN US15M"/>
    <property type="match status" value="1"/>
</dbReference>
<dbReference type="Pfam" id="PF00312">
    <property type="entry name" value="Ribosomal_S15"/>
    <property type="match status" value="1"/>
</dbReference>
<dbReference type="SMART" id="SM01387">
    <property type="entry name" value="Ribosomal_S15"/>
    <property type="match status" value="1"/>
</dbReference>
<dbReference type="SUPFAM" id="SSF47060">
    <property type="entry name" value="S15/NS1 RNA-binding domain"/>
    <property type="match status" value="1"/>
</dbReference>
<dbReference type="PROSITE" id="PS00362">
    <property type="entry name" value="RIBOSOMAL_S15"/>
    <property type="match status" value="1"/>
</dbReference>